<dbReference type="EC" id="1.3.5.1" evidence="1"/>
<dbReference type="EMBL" id="AE006468">
    <property type="protein sequence ID" value="AAL19678.1"/>
    <property type="molecule type" value="Genomic_DNA"/>
</dbReference>
<dbReference type="RefSeq" id="NP_459719.1">
    <property type="nucleotide sequence ID" value="NC_003197.2"/>
</dbReference>
<dbReference type="RefSeq" id="WP_000775561.1">
    <property type="nucleotide sequence ID" value="NC_003197.2"/>
</dbReference>
<dbReference type="SMR" id="Q8ZQU3"/>
<dbReference type="STRING" id="99287.STM0734"/>
<dbReference type="PaxDb" id="99287-STM0734"/>
<dbReference type="GeneID" id="1252254"/>
<dbReference type="KEGG" id="stm:STM0734"/>
<dbReference type="PATRIC" id="fig|99287.12.peg.766"/>
<dbReference type="HOGENOM" id="CLU_014312_6_1_6"/>
<dbReference type="OMA" id="PTGIWRM"/>
<dbReference type="PhylomeDB" id="Q8ZQU3"/>
<dbReference type="BioCyc" id="SENT99287:STM0734-MONOMER"/>
<dbReference type="UniPathway" id="UPA00223">
    <property type="reaction ID" value="UER01005"/>
</dbReference>
<dbReference type="Proteomes" id="UP000001014">
    <property type="component" value="Chromosome"/>
</dbReference>
<dbReference type="GO" id="GO:0005886">
    <property type="term" value="C:plasma membrane"/>
    <property type="evidence" value="ECO:0000318"/>
    <property type="project" value="GO_Central"/>
</dbReference>
<dbReference type="GO" id="GO:0045273">
    <property type="term" value="C:respiratory chain complex II (succinate dehydrogenase)"/>
    <property type="evidence" value="ECO:0000318"/>
    <property type="project" value="GO_Central"/>
</dbReference>
<dbReference type="GO" id="GO:0009055">
    <property type="term" value="F:electron transfer activity"/>
    <property type="evidence" value="ECO:0000318"/>
    <property type="project" value="GO_Central"/>
</dbReference>
<dbReference type="GO" id="GO:0050660">
    <property type="term" value="F:flavin adenine dinucleotide binding"/>
    <property type="evidence" value="ECO:0000318"/>
    <property type="project" value="GO_Central"/>
</dbReference>
<dbReference type="GO" id="GO:0008177">
    <property type="term" value="F:succinate dehydrogenase (quinone) activity"/>
    <property type="evidence" value="ECO:0007669"/>
    <property type="project" value="UniProtKB-EC"/>
</dbReference>
<dbReference type="GO" id="GO:0000104">
    <property type="term" value="F:succinate dehydrogenase activity"/>
    <property type="evidence" value="ECO:0000318"/>
    <property type="project" value="GO_Central"/>
</dbReference>
<dbReference type="GO" id="GO:0009061">
    <property type="term" value="P:anaerobic respiration"/>
    <property type="evidence" value="ECO:0000318"/>
    <property type="project" value="GO_Central"/>
</dbReference>
<dbReference type="GO" id="GO:0022900">
    <property type="term" value="P:electron transport chain"/>
    <property type="evidence" value="ECO:0007669"/>
    <property type="project" value="InterPro"/>
</dbReference>
<dbReference type="GO" id="GO:0006099">
    <property type="term" value="P:tricarboxylic acid cycle"/>
    <property type="evidence" value="ECO:0000318"/>
    <property type="project" value="GO_Central"/>
</dbReference>
<dbReference type="FunFam" id="3.90.700.10:FF:000001">
    <property type="entry name" value="Mitochondrial succinate dehydrogenase flavoprotein subunit"/>
    <property type="match status" value="1"/>
</dbReference>
<dbReference type="FunFam" id="4.10.80.40:FF:000001">
    <property type="entry name" value="Succinate dehydrogenase flavoprotein subunit"/>
    <property type="match status" value="1"/>
</dbReference>
<dbReference type="FunFam" id="1.20.58.100:FF:000001">
    <property type="entry name" value="Succinate dehydrogenase flavoprotein subunit (SdhA)"/>
    <property type="match status" value="1"/>
</dbReference>
<dbReference type="Gene3D" id="3.50.50.60">
    <property type="entry name" value="FAD/NAD(P)-binding domain"/>
    <property type="match status" value="1"/>
</dbReference>
<dbReference type="Gene3D" id="1.20.58.100">
    <property type="entry name" value="Fumarate reductase/succinate dehydrogenase flavoprotein-like, C-terminal domain"/>
    <property type="match status" value="1"/>
</dbReference>
<dbReference type="Gene3D" id="4.10.80.40">
    <property type="entry name" value="succinate dehydrogenase protein domain"/>
    <property type="match status" value="1"/>
</dbReference>
<dbReference type="Gene3D" id="3.90.700.10">
    <property type="entry name" value="Succinate dehydrogenase/fumarate reductase flavoprotein, catalytic domain"/>
    <property type="match status" value="1"/>
</dbReference>
<dbReference type="InterPro" id="IPR003953">
    <property type="entry name" value="FAD-dep_OxRdtase_2_FAD-bd"/>
</dbReference>
<dbReference type="InterPro" id="IPR036188">
    <property type="entry name" value="FAD/NAD-bd_sf"/>
</dbReference>
<dbReference type="InterPro" id="IPR003952">
    <property type="entry name" value="FRD_SDH_FAD_BS"/>
</dbReference>
<dbReference type="InterPro" id="IPR037099">
    <property type="entry name" value="Fum_R/Succ_DH_flav-like_C_sf"/>
</dbReference>
<dbReference type="InterPro" id="IPR015939">
    <property type="entry name" value="Fum_Rdtase/Succ_DH_flav-like_C"/>
</dbReference>
<dbReference type="InterPro" id="IPR030664">
    <property type="entry name" value="SdhA/FrdA/AprA"/>
</dbReference>
<dbReference type="InterPro" id="IPR027477">
    <property type="entry name" value="Succ_DH/fumarate_Rdtase_cat_sf"/>
</dbReference>
<dbReference type="InterPro" id="IPR011281">
    <property type="entry name" value="Succ_DH_flav_su_fwd"/>
</dbReference>
<dbReference type="InterPro" id="IPR014006">
    <property type="entry name" value="Succ_Dhase_FrdA_Gneg"/>
</dbReference>
<dbReference type="NCBIfam" id="TIGR01816">
    <property type="entry name" value="sdhA_forward"/>
    <property type="match status" value="1"/>
</dbReference>
<dbReference type="NCBIfam" id="TIGR01812">
    <property type="entry name" value="sdhA_frdA_Gneg"/>
    <property type="match status" value="1"/>
</dbReference>
<dbReference type="PANTHER" id="PTHR11632">
    <property type="entry name" value="SUCCINATE DEHYDROGENASE 2 FLAVOPROTEIN SUBUNIT"/>
    <property type="match status" value="1"/>
</dbReference>
<dbReference type="PANTHER" id="PTHR11632:SF51">
    <property type="entry name" value="SUCCINATE DEHYDROGENASE [UBIQUINONE] FLAVOPROTEIN SUBUNIT, MITOCHONDRIAL"/>
    <property type="match status" value="1"/>
</dbReference>
<dbReference type="Pfam" id="PF00890">
    <property type="entry name" value="FAD_binding_2"/>
    <property type="match status" value="1"/>
</dbReference>
<dbReference type="Pfam" id="PF02910">
    <property type="entry name" value="Succ_DH_flav_C"/>
    <property type="match status" value="1"/>
</dbReference>
<dbReference type="PIRSF" id="PIRSF000171">
    <property type="entry name" value="SDHA_APRA_LASPO"/>
    <property type="match status" value="1"/>
</dbReference>
<dbReference type="PRINTS" id="PR00368">
    <property type="entry name" value="FADPNR"/>
</dbReference>
<dbReference type="SUPFAM" id="SSF51905">
    <property type="entry name" value="FAD/NAD(P)-binding domain"/>
    <property type="match status" value="1"/>
</dbReference>
<dbReference type="SUPFAM" id="SSF46977">
    <property type="entry name" value="Succinate dehydrogenase/fumarate reductase flavoprotein C-terminal domain"/>
    <property type="match status" value="1"/>
</dbReference>
<dbReference type="SUPFAM" id="SSF56425">
    <property type="entry name" value="Succinate dehydrogenase/fumarate reductase flavoprotein, catalytic domain"/>
    <property type="match status" value="1"/>
</dbReference>
<dbReference type="PROSITE" id="PS00504">
    <property type="entry name" value="FRD_SDH_FAD_BINDING"/>
    <property type="match status" value="1"/>
</dbReference>
<organism>
    <name type="scientific">Salmonella typhimurium (strain LT2 / SGSC1412 / ATCC 700720)</name>
    <dbReference type="NCBI Taxonomy" id="99287"/>
    <lineage>
        <taxon>Bacteria</taxon>
        <taxon>Pseudomonadati</taxon>
        <taxon>Pseudomonadota</taxon>
        <taxon>Gammaproteobacteria</taxon>
        <taxon>Enterobacterales</taxon>
        <taxon>Enterobacteriaceae</taxon>
        <taxon>Salmonella</taxon>
    </lineage>
</organism>
<feature type="chain" id="PRO_0000158658" description="Succinate dehydrogenase flavoprotein subunit">
    <location>
        <begin position="1"/>
        <end position="588"/>
    </location>
</feature>
<feature type="active site" description="Proton acceptor" evidence="1">
    <location>
        <position position="286"/>
    </location>
</feature>
<feature type="binding site" evidence="1">
    <location>
        <begin position="14"/>
        <end position="19"/>
    </location>
    <ligand>
        <name>FAD</name>
        <dbReference type="ChEBI" id="CHEBI:57692"/>
    </ligand>
</feature>
<feature type="binding site" evidence="1">
    <location>
        <begin position="37"/>
        <end position="52"/>
    </location>
    <ligand>
        <name>FAD</name>
        <dbReference type="ChEBI" id="CHEBI:57692"/>
    </ligand>
</feature>
<feature type="binding site" evidence="1">
    <location>
        <position position="221"/>
    </location>
    <ligand>
        <name>FAD</name>
        <dbReference type="ChEBI" id="CHEBI:57692"/>
    </ligand>
</feature>
<feature type="binding site" evidence="1">
    <location>
        <position position="242"/>
    </location>
    <ligand>
        <name>substrate</name>
    </ligand>
</feature>
<feature type="binding site" evidence="1">
    <location>
        <position position="254"/>
    </location>
    <ligand>
        <name>substrate</name>
    </ligand>
</feature>
<feature type="binding site" evidence="1">
    <location>
        <position position="354"/>
    </location>
    <ligand>
        <name>substrate</name>
    </ligand>
</feature>
<feature type="binding site" evidence="1">
    <location>
        <position position="388"/>
    </location>
    <ligand>
        <name>FAD</name>
        <dbReference type="ChEBI" id="CHEBI:57692"/>
    </ligand>
</feature>
<feature type="binding site" evidence="1">
    <location>
        <position position="399"/>
    </location>
    <ligand>
        <name>substrate</name>
    </ligand>
</feature>
<feature type="binding site" evidence="1">
    <location>
        <begin position="404"/>
        <end position="405"/>
    </location>
    <ligand>
        <name>FAD</name>
        <dbReference type="ChEBI" id="CHEBI:57692"/>
    </ligand>
</feature>
<feature type="modified residue" description="Tele-8alpha-FAD histidine" evidence="1">
    <location>
        <position position="45"/>
    </location>
</feature>
<keyword id="KW-0997">Cell inner membrane</keyword>
<keyword id="KW-1003">Cell membrane</keyword>
<keyword id="KW-0249">Electron transport</keyword>
<keyword id="KW-0274">FAD</keyword>
<keyword id="KW-0285">Flavoprotein</keyword>
<keyword id="KW-0472">Membrane</keyword>
<keyword id="KW-0560">Oxidoreductase</keyword>
<keyword id="KW-1185">Reference proteome</keyword>
<keyword id="KW-0813">Transport</keyword>
<keyword id="KW-0816">Tricarboxylic acid cycle</keyword>
<sequence>MKLPVREFDAVVIGAGGAGMRAALQISQSGQTCALLSKVFPTRSHTVSAQGGITVALGNTHEDNWEWHMYDTVKGSDYIGDQDAIEYMCKTGPEAILELEHMGLPFSRLDDGRIYQRPFGGQSKNFGGEQAARTAAAADRTGHALLHTLYQQNLKNHTTIFSEWYALDLVKNQDGAVVGCTALCIETGEVVYFKARATVLATGGAGRIYQSTTNAHINTGDGVGMALRAGVPVQDMEMWQFHPTGIAGAGVLVTEGCRGEGGYLLNKHGERFMERYAPNAKDLAGRDVVARSIMIEIREGRGCDGPWGPHAKLKLDHLGKEVLESRLPGILELSRTFAHVDPVKEPIPVIPTCHYMMGGIPTKVTGQALTVNEQGEDVVIPGLFAVGEIACVSVHGANRLGGNSLLDLVVFGRAAGLHLQESIAEQGVLRDASESDVEGSLERLNRWNNNRNGEDPVAIRKALQECMQHNFSVFREGDAMAKGLEQLKVIRERLKNARLDDTSSEFNTQRVECLELDNLMETAYATAVSANFRTESRGAHSRFDFPERDDANWLCHTLYQPQTESMTRRSVNMEPKLRPAFPPKIRTY</sequence>
<protein>
    <recommendedName>
        <fullName>Succinate dehydrogenase flavoprotein subunit</fullName>
        <ecNumber evidence="1">1.3.5.1</ecNumber>
    </recommendedName>
</protein>
<reference key="1">
    <citation type="journal article" date="2001" name="Nature">
        <title>Complete genome sequence of Salmonella enterica serovar Typhimurium LT2.</title>
        <authorList>
            <person name="McClelland M."/>
            <person name="Sanderson K.E."/>
            <person name="Spieth J."/>
            <person name="Clifton S.W."/>
            <person name="Latreille P."/>
            <person name="Courtney L."/>
            <person name="Porwollik S."/>
            <person name="Ali J."/>
            <person name="Dante M."/>
            <person name="Du F."/>
            <person name="Hou S."/>
            <person name="Layman D."/>
            <person name="Leonard S."/>
            <person name="Nguyen C."/>
            <person name="Scott K."/>
            <person name="Holmes A."/>
            <person name="Grewal N."/>
            <person name="Mulvaney E."/>
            <person name="Ryan E."/>
            <person name="Sun H."/>
            <person name="Florea L."/>
            <person name="Miller W."/>
            <person name="Stoneking T."/>
            <person name="Nhan M."/>
            <person name="Waterston R."/>
            <person name="Wilson R.K."/>
        </authorList>
    </citation>
    <scope>NUCLEOTIDE SEQUENCE [LARGE SCALE GENOMIC DNA]</scope>
    <source>
        <strain>LT2 / SGSC1412 / ATCC 700720</strain>
    </source>
</reference>
<comment type="function">
    <text evidence="1">Two distinct, membrane-bound, FAD-containing enzymes are responsible for the catalysis of fumarate and succinate interconversion; the fumarate reductase is used in anaerobic growth, and the succinate dehydrogenase is used in aerobic growth.</text>
</comment>
<comment type="catalytic activity">
    <reaction evidence="1">
        <text>a quinone + succinate = fumarate + a quinol</text>
        <dbReference type="Rhea" id="RHEA:40523"/>
        <dbReference type="ChEBI" id="CHEBI:24646"/>
        <dbReference type="ChEBI" id="CHEBI:29806"/>
        <dbReference type="ChEBI" id="CHEBI:30031"/>
        <dbReference type="ChEBI" id="CHEBI:132124"/>
        <dbReference type="EC" id="1.3.5.1"/>
    </reaction>
</comment>
<comment type="cofactor">
    <cofactor evidence="1">
        <name>FAD</name>
        <dbReference type="ChEBI" id="CHEBI:57692"/>
    </cofactor>
</comment>
<comment type="pathway">
    <text evidence="1">Carbohydrate metabolism; tricarboxylic acid cycle; fumarate from succinate (bacterial route): step 1/1.</text>
</comment>
<comment type="subunit">
    <text evidence="1">Part of an enzyme complex containing four subunits: a flavoprotein, an iron-sulfur, cytochrome b-556, and a hydrophobic anchor protein.</text>
</comment>
<comment type="subcellular location">
    <subcellularLocation>
        <location evidence="1">Cell inner membrane</location>
        <topology evidence="1">Peripheral membrane protein</topology>
        <orientation evidence="1">Cytoplasmic side</orientation>
    </subcellularLocation>
</comment>
<comment type="similarity">
    <text evidence="2">Belongs to the FAD-dependent oxidoreductase 2 family. FRD/SDH subfamily.</text>
</comment>
<accession>Q8ZQU3</accession>
<evidence type="ECO:0000250" key="1">
    <source>
        <dbReference type="UniProtKB" id="P0AC41"/>
    </source>
</evidence>
<evidence type="ECO:0000305" key="2"/>
<proteinExistence type="inferred from homology"/>
<name>SDHA_SALTY</name>
<gene>
    <name type="primary">sdhA</name>
    <name type="ordered locus">STM0734</name>
</gene>